<dbReference type="EC" id="3.6.1.74"/>
<dbReference type="EC" id="2.7.7.50"/>
<dbReference type="EC" id="2.1.1.56"/>
<dbReference type="EMBL" id="AF095689">
    <property type="protein sequence ID" value="AAF33967.1"/>
    <property type="molecule type" value="Genomic_DNA"/>
</dbReference>
<dbReference type="SMR" id="Q9JFA8"/>
<dbReference type="Proteomes" id="UP000163220">
    <property type="component" value="Genome"/>
</dbReference>
<dbReference type="GO" id="GO:0044423">
    <property type="term" value="C:virion component"/>
    <property type="evidence" value="ECO:0007669"/>
    <property type="project" value="UniProtKB-KW"/>
</dbReference>
<dbReference type="GO" id="GO:0005525">
    <property type="term" value="F:GTP binding"/>
    <property type="evidence" value="ECO:0007669"/>
    <property type="project" value="UniProtKB-KW"/>
</dbReference>
<dbReference type="GO" id="GO:0050355">
    <property type="term" value="F:inorganic triphosphate phosphatase activity"/>
    <property type="evidence" value="ECO:0007669"/>
    <property type="project" value="InterPro"/>
</dbReference>
<dbReference type="GO" id="GO:0046872">
    <property type="term" value="F:metal ion binding"/>
    <property type="evidence" value="ECO:0007669"/>
    <property type="project" value="UniProtKB-KW"/>
</dbReference>
<dbReference type="GO" id="GO:0004482">
    <property type="term" value="F:mRNA 5'-cap (guanine-N7-)-methyltransferase activity"/>
    <property type="evidence" value="ECO:0007669"/>
    <property type="project" value="UniProtKB-EC"/>
</dbReference>
<dbReference type="GO" id="GO:0140818">
    <property type="term" value="F:mRNA 5'-triphosphate monophosphatase activity"/>
    <property type="evidence" value="ECO:0007669"/>
    <property type="project" value="RHEA"/>
</dbReference>
<dbReference type="GO" id="GO:0004484">
    <property type="term" value="F:mRNA guanylyltransferase activity"/>
    <property type="evidence" value="ECO:0007669"/>
    <property type="project" value="UniProtKB-EC"/>
</dbReference>
<dbReference type="GO" id="GO:0004651">
    <property type="term" value="F:polynucleotide 5'-phosphatase activity"/>
    <property type="evidence" value="ECO:0007669"/>
    <property type="project" value="UniProtKB-EC"/>
</dbReference>
<dbReference type="GO" id="GO:0003723">
    <property type="term" value="F:RNA binding"/>
    <property type="evidence" value="ECO:0007669"/>
    <property type="project" value="UniProtKB-KW"/>
</dbReference>
<dbReference type="FunFam" id="3.30.470.140:FF:000001">
    <property type="entry name" value="mRNA-capping enzyme catalytic subunit"/>
    <property type="match status" value="1"/>
</dbReference>
<dbReference type="FunFam" id="3.40.50.150:FF:000307">
    <property type="entry name" value="mRNA-capping enzyme catalytic subunit"/>
    <property type="match status" value="1"/>
</dbReference>
<dbReference type="Gene3D" id="2.40.50.830">
    <property type="match status" value="1"/>
</dbReference>
<dbReference type="Gene3D" id="3.20.100.20">
    <property type="match status" value="1"/>
</dbReference>
<dbReference type="Gene3D" id="3.30.470.140">
    <property type="match status" value="1"/>
</dbReference>
<dbReference type="Gene3D" id="3.40.50.150">
    <property type="entry name" value="Vaccinia Virus protein VP39"/>
    <property type="match status" value="1"/>
</dbReference>
<dbReference type="InterPro" id="IPR048425">
    <property type="entry name" value="MCEL_GT_NTPase"/>
</dbReference>
<dbReference type="InterPro" id="IPR048426">
    <property type="entry name" value="MCEL_GT_OB"/>
</dbReference>
<dbReference type="InterPro" id="IPR046429">
    <property type="entry name" value="MCEL_NTPase_sf"/>
</dbReference>
<dbReference type="InterPro" id="IPR046428">
    <property type="entry name" value="MCEL_OB_dom_sf"/>
</dbReference>
<dbReference type="InterPro" id="IPR019602">
    <property type="entry name" value="MCEL_TPase"/>
</dbReference>
<dbReference type="InterPro" id="IPR046430">
    <property type="entry name" value="MCEL_TPase_sf"/>
</dbReference>
<dbReference type="InterPro" id="IPR004971">
    <property type="entry name" value="mRNA_G-N7_MeTrfase_dom"/>
</dbReference>
<dbReference type="InterPro" id="IPR039753">
    <property type="entry name" value="RG7MT1"/>
</dbReference>
<dbReference type="InterPro" id="IPR029063">
    <property type="entry name" value="SAM-dependent_MTases_sf"/>
</dbReference>
<dbReference type="PANTHER" id="PTHR12189:SF2">
    <property type="entry name" value="MRNA CAP GUANINE-N7 METHYLTRANSFERASE"/>
    <property type="match status" value="1"/>
</dbReference>
<dbReference type="PANTHER" id="PTHR12189">
    <property type="entry name" value="MRNA GUANINE-7- METHYLTRANSFERASE"/>
    <property type="match status" value="1"/>
</dbReference>
<dbReference type="Pfam" id="PF21004">
    <property type="entry name" value="MCEL_GT_NTPase"/>
    <property type="match status" value="1"/>
</dbReference>
<dbReference type="Pfam" id="PF21005">
    <property type="entry name" value="MCEL_GT_OB"/>
    <property type="match status" value="1"/>
</dbReference>
<dbReference type="Pfam" id="PF10640">
    <property type="entry name" value="MCEL_TPase"/>
    <property type="match status" value="1"/>
</dbReference>
<dbReference type="Pfam" id="PF03291">
    <property type="entry name" value="mRNA_G-N7_MeTrfase"/>
    <property type="match status" value="1"/>
</dbReference>
<dbReference type="SUPFAM" id="SSF53335">
    <property type="entry name" value="S-adenosyl-L-methionine-dependent methyltransferases"/>
    <property type="match status" value="1"/>
</dbReference>
<dbReference type="PROSITE" id="PS51562">
    <property type="entry name" value="RNA_CAP0_MT"/>
    <property type="match status" value="1"/>
</dbReference>
<accession>Q9JFA8</accession>
<organism>
    <name type="scientific">Vaccinia virus (strain Tian Tan)</name>
    <name type="common">VACV</name>
    <dbReference type="NCBI Taxonomy" id="10253"/>
    <lineage>
        <taxon>Viruses</taxon>
        <taxon>Varidnaviria</taxon>
        <taxon>Bamfordvirae</taxon>
        <taxon>Nucleocytoviricota</taxon>
        <taxon>Pokkesviricetes</taxon>
        <taxon>Chitovirales</taxon>
        <taxon>Poxviridae</taxon>
        <taxon>Chordopoxvirinae</taxon>
        <taxon>Orthopoxvirus</taxon>
        <taxon>Vaccinia virus</taxon>
    </lineage>
</organism>
<reference key="1">
    <citation type="submission" date="1998-09" db="EMBL/GenBank/DDBJ databases">
        <title>Complete genomic sequence of vaccinia virus (Tian Tan strain).</title>
        <authorList>
            <person name="Jin Q."/>
            <person name="Hou Y.D."/>
            <person name="Cheng N.H."/>
            <person name="Yao E.M."/>
            <person name="Cheng S.X."/>
            <person name="Yang X.K."/>
            <person name="Jing D.Y."/>
            <person name="Yu W.H."/>
            <person name="Yuan J.S."/>
            <person name="Ma X.J."/>
        </authorList>
    </citation>
    <scope>NUCLEOTIDE SEQUENCE [LARGE SCALE GENOMIC DNA]</scope>
</reference>
<keyword id="KW-0342">GTP-binding</keyword>
<keyword id="KW-0378">Hydrolase</keyword>
<keyword id="KW-0460">Magnesium</keyword>
<keyword id="KW-0479">Metal-binding</keyword>
<keyword id="KW-0489">Methyltransferase</keyword>
<keyword id="KW-0506">mRNA capping</keyword>
<keyword id="KW-0507">mRNA processing</keyword>
<keyword id="KW-0511">Multifunctional enzyme</keyword>
<keyword id="KW-0547">Nucleotide-binding</keyword>
<keyword id="KW-0548">Nucleotidyltransferase</keyword>
<keyword id="KW-0694">RNA-binding</keyword>
<keyword id="KW-0949">S-adenosyl-L-methionine</keyword>
<keyword id="KW-0808">Transferase</keyword>
<keyword id="KW-0946">Virion</keyword>
<gene>
    <name type="primary">OPG113</name>
    <name type="ORF">TD1R</name>
</gene>
<proteinExistence type="inferred from homology"/>
<evidence type="ECO:0000250" key="1"/>
<evidence type="ECO:0000250" key="2">
    <source>
        <dbReference type="UniProtKB" id="P04298"/>
    </source>
</evidence>
<evidence type="ECO:0000255" key="3">
    <source>
        <dbReference type="PROSITE-ProRule" id="PRU00895"/>
    </source>
</evidence>
<evidence type="ECO:0000305" key="4"/>
<organismHost>
    <name type="scientific">Homo sapiens</name>
    <name type="common">Human</name>
    <dbReference type="NCBI Taxonomy" id="9606"/>
</organismHost>
<protein>
    <recommendedName>
        <fullName>mRNA-capping enzyme catalytic subunit</fullName>
    </recommendedName>
    <alternativeName>
        <fullName>Virus termination factor large subunit</fullName>
        <shortName>VTF large subunit</shortName>
    </alternativeName>
    <alternativeName>
        <fullName>mRNA-capping enzyme 97 kDa subunit</fullName>
    </alternativeName>
    <alternativeName>
        <fullName>mRNA-capping enzyme D1 subunit</fullName>
    </alternativeName>
    <alternativeName>
        <fullName>mRNA-capping enzyme large subunit</fullName>
    </alternativeName>
    <domain>
        <recommendedName>
            <fullName>Polynucleotide 5'-triphosphatase</fullName>
            <ecNumber>3.6.1.74</ecNumber>
        </recommendedName>
        <alternativeName>
            <fullName>mRNA 5'-triphosphatase</fullName>
            <shortName>TPase</shortName>
        </alternativeName>
    </domain>
    <domain>
        <recommendedName>
            <fullName>mRNA guanylyltransferase</fullName>
            <ecNumber>2.7.7.50</ecNumber>
        </recommendedName>
        <alternativeName>
            <fullName>GTP--RNA guanylyltransferase</fullName>
            <shortName>GTase</shortName>
        </alternativeName>
    </domain>
    <domain>
        <recommendedName>
            <fullName>mRNA (guanine-N(7))-methyltransferase</fullName>
            <ecNumber>2.1.1.56</ecNumber>
        </recommendedName>
        <alternativeName>
            <fullName>mRNA cap methyltransferase</fullName>
        </alternativeName>
    </domain>
</protein>
<sequence>MDANVVSSSTIATYIDALAKNASELEQRSTAYEINNELELVFIKPPLITLTNVVNISTIQESFIRFTVTNKEGVKIRTKIPLSKVHGLDVKNVQLVDAIDNIVWEKKSLVTENRLHKECLLRLSTEERHIFLDYKKYGSSIRLELVNLIQAKTKNFTIDFKLKYFLGSGAQSKSSLLHAINHPKSRPNTSLEIEFTPRDNEKVPYDELIKELTTLSRHIFMASPENVILSPPINAPIKTFMLPKQDIVGLDLENLYAVTKTDGIPITIRVTSNGLYCYFTHLGYIIRYPVKRIIDSEVVVFGEAVKDKNWTVYLIKLIEPVNAINDRLEESKYVESKLVDICDRIVFKSKKYEGPFTTTSEVVDMLSTYLPKQPEGVILFYSKGPKSNIDFKIKKENTIDQTANVVFRYMSSEPIIFGESSIFVEYKKFSNDKGFPKEYGSGKIVLYNGVNYLNNIYCLEYINTHNEVGIKSVVVPIKFIAEFLVNGEILKPRIDKTMKYINSEDYYGNQHNIIVEHLRDQSIKIGDIFNEDKLSDVGHQYANNDKFRLNPAVSYFTNKRTRGPLGILSNYVKTLLISMYCSKTFLDDSNKRKVLAIDFGNGADLEKYFYGEIALLVATDPDADAIARGNERYNKLNSGIKTKYYKFDYIQETIRSDTFVSSVREVFYFGKFKIIDWQFAIHYSFHPRHYATVMNNLSELTASGGKVLITTMDGDKLSKLTDKKTFIIHKNLPSSENYMSVEKIADDRIVVYNPSTMSTPMTEYIIKKNDIVRVFNEYGFVLVDNVDFATIIERSKKFINGASTMEDRPSTRNFFELNRGAIKCEGLDVEDLLSYYVVYVFSKR</sequence>
<feature type="chain" id="PRO_0000210123" description="mRNA-capping enzyme catalytic subunit">
    <location>
        <begin position="1"/>
        <end position="844"/>
    </location>
</feature>
<feature type="domain" description="mRNA cap 0 methyltransferase" evidence="3">
    <location>
        <begin position="516"/>
        <end position="844"/>
    </location>
</feature>
<feature type="region of interest" description="Triphosphatase-guanylyltransferase" evidence="2">
    <location>
        <begin position="1"/>
        <end position="539"/>
    </location>
</feature>
<feature type="active site" description="N6-GMP-lysine intermediate" evidence="1">
    <location>
        <position position="260"/>
    </location>
</feature>
<feature type="binding site" evidence="2">
    <location>
        <position position="37"/>
    </location>
    <ligand>
        <name>Mg(2+)</name>
        <dbReference type="ChEBI" id="CHEBI:18420"/>
        <note>catalytic; for RNA triphosphatase activity</note>
    </ligand>
</feature>
<feature type="binding site" evidence="2">
    <location>
        <position position="39"/>
    </location>
    <ligand>
        <name>Mg(2+)</name>
        <dbReference type="ChEBI" id="CHEBI:18420"/>
        <note>catalytic; for RNA triphosphatase activity</note>
    </ligand>
</feature>
<feature type="binding site" evidence="2">
    <location>
        <position position="192"/>
    </location>
    <ligand>
        <name>Mg(2+)</name>
        <dbReference type="ChEBI" id="CHEBI:18420"/>
        <note>catalytic; for RNA triphosphatase activity</note>
    </ligand>
</feature>
<feature type="binding site" evidence="2">
    <location>
        <position position="194"/>
    </location>
    <ligand>
        <name>Mg(2+)</name>
        <dbReference type="ChEBI" id="CHEBI:18420"/>
        <note>catalytic; for RNA triphosphatase activity</note>
    </ligand>
</feature>
<feature type="binding site" evidence="3">
    <location>
        <begin position="549"/>
        <end position="550"/>
    </location>
    <ligand>
        <name>S-adenosyl-L-methionine</name>
        <dbReference type="ChEBI" id="CHEBI:59789"/>
    </ligand>
</feature>
<feature type="binding site" evidence="3">
    <location>
        <begin position="569"/>
        <end position="570"/>
    </location>
    <ligand>
        <name>mRNA</name>
        <dbReference type="ChEBI" id="CHEBI:33699"/>
    </ligand>
    <ligandPart>
        <name>mRNA cap</name>
    </ligandPart>
</feature>
<feature type="binding site" evidence="3">
    <location>
        <position position="573"/>
    </location>
    <ligand>
        <name>S-adenosyl-L-methionine</name>
        <dbReference type="ChEBI" id="CHEBI:59789"/>
    </ligand>
</feature>
<feature type="binding site" evidence="3">
    <location>
        <position position="598"/>
    </location>
    <ligand>
        <name>S-adenosyl-L-methionine</name>
        <dbReference type="ChEBI" id="CHEBI:59789"/>
    </ligand>
</feature>
<feature type="binding site" evidence="3">
    <location>
        <position position="620"/>
    </location>
    <ligand>
        <name>S-adenosyl-L-methionine</name>
        <dbReference type="ChEBI" id="CHEBI:59789"/>
    </ligand>
</feature>
<feature type="binding site" evidence="3">
    <location>
        <begin position="678"/>
        <end position="680"/>
    </location>
    <ligand>
        <name>S-adenosyl-L-methionine</name>
        <dbReference type="ChEBI" id="CHEBI:59789"/>
    </ligand>
</feature>
<feature type="site" description="Essential for RNA triphosphatase activity" evidence="2">
    <location>
        <position position="77"/>
    </location>
</feature>
<feature type="site" description="Essential for RNA triphosphatase activity" evidence="2">
    <location>
        <position position="107"/>
    </location>
</feature>
<feature type="site" description="Essential for RNA triphosphatase activity" evidence="2">
    <location>
        <position position="126"/>
    </location>
</feature>
<feature type="site" description="Essential for RNA triphosphatase activity" evidence="2">
    <location>
        <position position="159"/>
    </location>
</feature>
<feature type="site" description="Essential for RNA triphosphatase activity" evidence="2">
    <location>
        <position position="161"/>
    </location>
</feature>
<feature type="site" description="mRNA cap binding" evidence="3">
    <location>
        <position position="607"/>
    </location>
</feature>
<feature type="site" description="mRNA cap binding" evidence="3">
    <location>
        <position position="632"/>
    </location>
</feature>
<feature type="site" description="mRNA cap binding" evidence="3">
    <location>
        <position position="682"/>
    </location>
</feature>
<feature type="site" description="mRNA cap binding" evidence="3">
    <location>
        <position position="763"/>
    </location>
</feature>
<feature type="site" description="mRNA cap binding" evidence="3">
    <location>
        <position position="836"/>
    </location>
</feature>
<name>MCEL_VACCT</name>
<comment type="function">
    <text evidence="2">Catalytic subunit of the mRNA capping enzyme which catalyzes three enzymatic reactions: the 5' triphosphate end of the pre-mRNA is hydrolyzed to a diphosphate by RNA 5' triphosphatase; the diphosphate RNA end is capped with GMP by RNA guanylyltransferase and the GpppN cap is methylated by RNA (guanine-N7) methyltransferase. Heterodimeric mRNA capping enzyme catalyzes the linkage of a N7-methyl-guanosine moiety to the first transcribed nucleotide (cap 0 structure), whereas the methyltransferase OPG102 is responsible for a second methylation at the 2'-O position of the ribose (cap 1 structure). Also involved in early viral gene transcription termination and intermediate viral gene transcription initiation. Early gene transcription termination requires the termination factor VTF, the DNA-dependent ATPase NPH-I/OPG123 and the RAP94/OPG109 subunit of the viral RNA polymerase, as well as the presence of a specific termination motif. Binds, together with RAP94/OPG109, to the termination motif 5'-UUUUUNU-3' in the nascent early mRNA.</text>
</comment>
<comment type="catalytic activity">
    <reaction evidence="2">
        <text>a 5'-end triphospho-ribonucleoside in mRNA + H2O = a 5'-end diphospho-ribonucleoside in mRNA + phosphate + H(+)</text>
        <dbReference type="Rhea" id="RHEA:67004"/>
        <dbReference type="Rhea" id="RHEA-COMP:17164"/>
        <dbReference type="Rhea" id="RHEA-COMP:17165"/>
        <dbReference type="ChEBI" id="CHEBI:15377"/>
        <dbReference type="ChEBI" id="CHEBI:15378"/>
        <dbReference type="ChEBI" id="CHEBI:43474"/>
        <dbReference type="ChEBI" id="CHEBI:167616"/>
        <dbReference type="ChEBI" id="CHEBI:167618"/>
        <dbReference type="EC" id="3.6.1.74"/>
    </reaction>
    <physiologicalReaction direction="left-to-right" evidence="2">
        <dbReference type="Rhea" id="RHEA:67005"/>
    </physiologicalReaction>
</comment>
<comment type="catalytic activity">
    <reaction evidence="2">
        <text>a 5'-end diphospho-ribonucleoside in mRNA + GTP + H(+) = a 5'-end (5'-triphosphoguanosine)-ribonucleoside in mRNA + diphosphate</text>
        <dbReference type="Rhea" id="RHEA:67012"/>
        <dbReference type="Rhea" id="RHEA-COMP:17165"/>
        <dbReference type="Rhea" id="RHEA-COMP:17166"/>
        <dbReference type="ChEBI" id="CHEBI:15378"/>
        <dbReference type="ChEBI" id="CHEBI:33019"/>
        <dbReference type="ChEBI" id="CHEBI:37565"/>
        <dbReference type="ChEBI" id="CHEBI:167616"/>
        <dbReference type="ChEBI" id="CHEBI:167617"/>
        <dbReference type="EC" id="2.7.7.50"/>
    </reaction>
</comment>
<comment type="catalytic activity">
    <reaction evidence="2">
        <text>a 5'-end (5'-triphosphoguanosine)-ribonucleoside in mRNA + S-adenosyl-L-methionine = a 5'-end (N(7)-methyl 5'-triphosphoguanosine)-ribonucleoside in mRNA + S-adenosyl-L-homocysteine</text>
        <dbReference type="Rhea" id="RHEA:67008"/>
        <dbReference type="Rhea" id="RHEA-COMP:17166"/>
        <dbReference type="Rhea" id="RHEA-COMP:17167"/>
        <dbReference type="ChEBI" id="CHEBI:57856"/>
        <dbReference type="ChEBI" id="CHEBI:59789"/>
        <dbReference type="ChEBI" id="CHEBI:156461"/>
        <dbReference type="ChEBI" id="CHEBI:167617"/>
        <dbReference type="EC" id="2.1.1.56"/>
    </reaction>
</comment>
<comment type="cofactor">
    <cofactor evidence="2">
        <name>Mg(2+)</name>
        <dbReference type="ChEBI" id="CHEBI:18420"/>
    </cofactor>
</comment>
<comment type="subunit">
    <text evidence="2">Forms a heterodimer with the regulatory subunit OPG124.</text>
</comment>
<comment type="subcellular location">
    <subcellularLocation>
        <location evidence="2">Virion</location>
    </subcellularLocation>
    <text evidence="2">All the enzymes and other proteins required to synthesize early mRNAs are packaged within the virion core along with the DNA genome.</text>
</comment>
<comment type="domain">
    <text evidence="2">The N-terminus contains the triphosphatase and guanylyltransferase domains, whereas the C-terminus contains the methyltransferase domain. The N-terminus is involved in binding to the termination motif 5'-UUUUUNU-3' in the nascent mRNA.</text>
</comment>
<comment type="similarity">
    <text evidence="4">In the N-terminal section; belongs to the dsDNA virus mRNA guanylyltransferase family.</text>
</comment>
<comment type="similarity">
    <text evidence="3">In the C-terminal section; belongs to the class I-like SAM-binding methyltransferase superfamily. mRNA cap 0 methyltransferase family.</text>
</comment>